<proteinExistence type="inferred from homology"/>
<evidence type="ECO:0000255" key="1">
    <source>
        <dbReference type="HAMAP-Rule" id="MF_00662"/>
    </source>
</evidence>
<evidence type="ECO:0000256" key="2">
    <source>
        <dbReference type="SAM" id="MobiDB-lite"/>
    </source>
</evidence>
<reference key="1">
    <citation type="submission" date="2006-09" db="EMBL/GenBank/DDBJ databases">
        <authorList>
            <consortium name="The Klebsiella pneumonia Genome Sequencing Project"/>
            <person name="McClelland M."/>
            <person name="Sanderson E.K."/>
            <person name="Spieth J."/>
            <person name="Clifton W.S."/>
            <person name="Latreille P."/>
            <person name="Sabo A."/>
            <person name="Pepin K."/>
            <person name="Bhonagiri V."/>
            <person name="Porwollik S."/>
            <person name="Ali J."/>
            <person name="Wilson R.K."/>
        </authorList>
    </citation>
    <scope>NUCLEOTIDE SEQUENCE [LARGE SCALE GENOMIC DNA]</scope>
    <source>
        <strain>ATCC 700721 / MGH 78578</strain>
    </source>
</reference>
<sequence length="320" mass="35495">MLNDLKLSLQYILPKLWLTRLAGWGASKRAGWLTKLVIDLFVKYYKVDMKEAQKPDTAAYRTFNDFFVRPLRDDVRPLNTDPNVLVMPADGVISQLGAIENDKILQAKGHDYSLEALLAGNYQMADLFRNGSFATTYLSPRDYHRVHMPCNGILREMIYVPGDLFSVNHLTAQNVPNLFARNERVICLFDTEFGPMAQILVGATIVGSIETVWSGTVTPPREGIIKRWTWPAGDNEGSIALLKGQEMGRFKLGSTVINLFAPGQVKLVDTLQSLSVTKIGQPLATAVEATAAAEPAPLPEEEIRAEHRASPLVDDKQDQG</sequence>
<organism>
    <name type="scientific">Klebsiella pneumoniae subsp. pneumoniae (strain ATCC 700721 / MGH 78578)</name>
    <dbReference type="NCBI Taxonomy" id="272620"/>
    <lineage>
        <taxon>Bacteria</taxon>
        <taxon>Pseudomonadati</taxon>
        <taxon>Pseudomonadota</taxon>
        <taxon>Gammaproteobacteria</taxon>
        <taxon>Enterobacterales</taxon>
        <taxon>Enterobacteriaceae</taxon>
        <taxon>Klebsiella/Raoultella group</taxon>
        <taxon>Klebsiella</taxon>
        <taxon>Klebsiella pneumoniae complex</taxon>
    </lineage>
</organism>
<name>PSD_KLEP7</name>
<gene>
    <name evidence="1" type="primary">psd</name>
    <name type="ordered locus">KPN78578_44870</name>
    <name type="ORF">KPN_04557</name>
</gene>
<keyword id="KW-1003">Cell membrane</keyword>
<keyword id="KW-0210">Decarboxylase</keyword>
<keyword id="KW-0444">Lipid biosynthesis</keyword>
<keyword id="KW-0443">Lipid metabolism</keyword>
<keyword id="KW-0456">Lyase</keyword>
<keyword id="KW-0472">Membrane</keyword>
<keyword id="KW-0594">Phospholipid biosynthesis</keyword>
<keyword id="KW-1208">Phospholipid metabolism</keyword>
<keyword id="KW-0670">Pyruvate</keyword>
<keyword id="KW-0865">Zymogen</keyword>
<protein>
    <recommendedName>
        <fullName evidence="1">Phosphatidylserine decarboxylase proenzyme</fullName>
        <ecNumber evidence="1">4.1.1.65</ecNumber>
    </recommendedName>
    <component>
        <recommendedName>
            <fullName evidence="1">Phosphatidylserine decarboxylase alpha chain</fullName>
        </recommendedName>
    </component>
    <component>
        <recommendedName>
            <fullName evidence="1">Phosphatidylserine decarboxylase beta chain</fullName>
        </recommendedName>
    </component>
</protein>
<dbReference type="EC" id="4.1.1.65" evidence="1"/>
<dbReference type="EMBL" id="CP000647">
    <property type="protein sequence ID" value="ABR79911.1"/>
    <property type="molecule type" value="Genomic_DNA"/>
</dbReference>
<dbReference type="SMR" id="A6TH77"/>
<dbReference type="STRING" id="272620.KPN_04557"/>
<dbReference type="jPOST" id="A6TH77"/>
<dbReference type="PaxDb" id="272620-KPN_04557"/>
<dbReference type="EnsemblBacteria" id="ABR79911">
    <property type="protein sequence ID" value="ABR79911"/>
    <property type="gene ID" value="KPN_04557"/>
</dbReference>
<dbReference type="KEGG" id="kpn:KPN_04557"/>
<dbReference type="HOGENOM" id="CLU_029061_4_1_6"/>
<dbReference type="UniPathway" id="UPA00558">
    <property type="reaction ID" value="UER00616"/>
</dbReference>
<dbReference type="Proteomes" id="UP000000265">
    <property type="component" value="Chromosome"/>
</dbReference>
<dbReference type="GO" id="GO:0005886">
    <property type="term" value="C:plasma membrane"/>
    <property type="evidence" value="ECO:0007669"/>
    <property type="project" value="UniProtKB-SubCell"/>
</dbReference>
<dbReference type="GO" id="GO:0004609">
    <property type="term" value="F:phosphatidylserine decarboxylase activity"/>
    <property type="evidence" value="ECO:0007669"/>
    <property type="project" value="UniProtKB-UniRule"/>
</dbReference>
<dbReference type="GO" id="GO:0006646">
    <property type="term" value="P:phosphatidylethanolamine biosynthetic process"/>
    <property type="evidence" value="ECO:0007669"/>
    <property type="project" value="UniProtKB-UniRule"/>
</dbReference>
<dbReference type="HAMAP" id="MF_00662">
    <property type="entry name" value="PS_decarb_PSD_B_type1"/>
    <property type="match status" value="1"/>
</dbReference>
<dbReference type="InterPro" id="IPR003817">
    <property type="entry name" value="PS_Dcarbxylase"/>
</dbReference>
<dbReference type="InterPro" id="IPR033177">
    <property type="entry name" value="PSD-B"/>
</dbReference>
<dbReference type="InterPro" id="IPR033178">
    <property type="entry name" value="PSD_type1_pro"/>
</dbReference>
<dbReference type="NCBIfam" id="TIGR00163">
    <property type="entry name" value="PS_decarb"/>
    <property type="match status" value="1"/>
</dbReference>
<dbReference type="PANTHER" id="PTHR10067">
    <property type="entry name" value="PHOSPHATIDYLSERINE DECARBOXYLASE"/>
    <property type="match status" value="1"/>
</dbReference>
<dbReference type="PANTHER" id="PTHR10067:SF6">
    <property type="entry name" value="PHOSPHATIDYLSERINE DECARBOXYLASE PROENZYME, MITOCHONDRIAL"/>
    <property type="match status" value="1"/>
</dbReference>
<dbReference type="Pfam" id="PF02666">
    <property type="entry name" value="PS_Dcarbxylase"/>
    <property type="match status" value="1"/>
</dbReference>
<accession>A6TH77</accession>
<feature type="chain" id="PRO_1000026554" description="Phosphatidylserine decarboxylase beta chain" evidence="1">
    <location>
        <begin position="1"/>
        <end position="253"/>
    </location>
</feature>
<feature type="chain" id="PRO_1000026555" description="Phosphatidylserine decarboxylase alpha chain" evidence="1">
    <location>
        <begin position="254"/>
        <end position="320"/>
    </location>
</feature>
<feature type="region of interest" description="Disordered" evidence="2">
    <location>
        <begin position="290"/>
        <end position="320"/>
    </location>
</feature>
<feature type="compositionally biased region" description="Basic and acidic residues" evidence="2">
    <location>
        <begin position="301"/>
        <end position="320"/>
    </location>
</feature>
<feature type="active site" description="Charge relay system; for autoendoproteolytic cleavage activity" evidence="1">
    <location>
        <position position="90"/>
    </location>
</feature>
<feature type="active site" description="Charge relay system; for autoendoproteolytic cleavage activity" evidence="1">
    <location>
        <position position="147"/>
    </location>
</feature>
<feature type="active site" description="Charge relay system; for autoendoproteolytic cleavage activity" evidence="1">
    <location>
        <position position="254"/>
    </location>
</feature>
<feature type="active site" description="Schiff-base intermediate with substrate; via pyruvic acid; for decarboxylase activity" evidence="1">
    <location>
        <position position="254"/>
    </location>
</feature>
<feature type="site" description="Cleavage (non-hydrolytic); by autocatalysis" evidence="1">
    <location>
        <begin position="253"/>
        <end position="254"/>
    </location>
</feature>
<feature type="modified residue" description="Pyruvic acid (Ser); by autocatalysis" evidence="1">
    <location>
        <position position="254"/>
    </location>
</feature>
<comment type="function">
    <text evidence="1">Catalyzes the formation of phosphatidylethanolamine (PtdEtn) from phosphatidylserine (PtdSer).</text>
</comment>
<comment type="catalytic activity">
    <reaction evidence="1">
        <text>a 1,2-diacyl-sn-glycero-3-phospho-L-serine + H(+) = a 1,2-diacyl-sn-glycero-3-phosphoethanolamine + CO2</text>
        <dbReference type="Rhea" id="RHEA:20828"/>
        <dbReference type="ChEBI" id="CHEBI:15378"/>
        <dbReference type="ChEBI" id="CHEBI:16526"/>
        <dbReference type="ChEBI" id="CHEBI:57262"/>
        <dbReference type="ChEBI" id="CHEBI:64612"/>
        <dbReference type="EC" id="4.1.1.65"/>
    </reaction>
</comment>
<comment type="cofactor">
    <cofactor evidence="1">
        <name>pyruvate</name>
        <dbReference type="ChEBI" id="CHEBI:15361"/>
    </cofactor>
    <text evidence="1">Binds 1 pyruvoyl group covalently per subunit.</text>
</comment>
<comment type="pathway">
    <text evidence="1">Phospholipid metabolism; phosphatidylethanolamine biosynthesis; phosphatidylethanolamine from CDP-diacylglycerol: step 2/2.</text>
</comment>
<comment type="subunit">
    <text evidence="1">Heterodimer of a large membrane-associated beta subunit and a small pyruvoyl-containing alpha subunit.</text>
</comment>
<comment type="subcellular location">
    <subcellularLocation>
        <location evidence="1">Cell membrane</location>
        <topology evidence="1">Peripheral membrane protein</topology>
    </subcellularLocation>
</comment>
<comment type="PTM">
    <text evidence="1">Is synthesized initially as an inactive proenzyme. Formation of the active enzyme involves a self-maturation process in which the active site pyruvoyl group is generated from an internal serine residue via an autocatalytic post-translational modification. Two non-identical subunits are generated from the proenzyme in this reaction, and the pyruvate is formed at the N-terminus of the alpha chain, which is derived from the carboxyl end of the proenzyme. The autoendoproteolytic cleavage occurs by a canonical serine protease mechanism, in which the side chain hydroxyl group of the serine supplies its oxygen atom to form the C-terminus of the beta chain, while the remainder of the serine residue undergoes an oxidative deamination to produce ammonia and the pyruvoyl prosthetic group on the alpha chain. During this reaction, the Ser that is part of the protease active site of the proenzyme becomes the pyruvoyl prosthetic group, which constitutes an essential element of the active site of the mature decarboxylase.</text>
</comment>
<comment type="similarity">
    <text evidence="1">Belongs to the phosphatidylserine decarboxylase family. PSD-B subfamily. Prokaryotic type I sub-subfamily.</text>
</comment>